<sequence>MINPSTKVSTKVLDKKYNFKIEYKLIKNKDLLKSRLSEIPKSSGCYLFKDIDNNLLYIGKSKTLRNRVSSYFNNYAELSPRLSLMVRQITEIEIIVTDSEYEALNLESNLIKTNKPYFNILLKDDKKYPYLCITWSEQYPRIFITRKRRNRNNFDRYYGPYVDVGLLRKTLFIIKKIFPLRQRPRPVYKDRTCLNYSIGRCPGVCQEIISSEDYKKTMKQVSMIFQGRNDDLEVFLERKMNQYSNDLEFENAAKIRDQISGLKLLTESQKISIPDSSINRDIFGIVSENNISSIQIFQMRSGKLIGRIGYTQKIDNSDETEILQRVLEEHYINVEGVEIPSEILLQFNLPKHNTIEEWLSELRQKKVKLIIPKRNKKFETVEMVLKNAKLELERILNGIQDNESSIEDLTQILELTNQPRRIEGYDISHIQGTDPVASQVVFIDGIPSKQNYRKYKIKDPNIFIGHSDDFASIYEVIYRRFKKWSKFKIDGGDISSLQDKKKSTLENDLLTDWPDLIMIDGGKGQLNAALKALTQLDLHEEVNICSLAKKNEEIFIPGFSKSLDTDQNQKGLLLLRRVRDEAHRFALSFHRNKRSARMNRSQLSQIPGLGPSRIKDLLEHFNSIDAIRIASREELSKVKGLGMHSANDIYNYFNEL</sequence>
<accession>Q7V1I9</accession>
<comment type="function">
    <text evidence="1">The UvrABC repair system catalyzes the recognition and processing of DNA lesions. UvrC both incises the 5' and 3' sides of the lesion. The N-terminal half is responsible for the 3' incision and the C-terminal half is responsible for the 5' incision.</text>
</comment>
<comment type="subunit">
    <text evidence="1">Interacts with UvrB in an incision complex.</text>
</comment>
<comment type="subcellular location">
    <subcellularLocation>
        <location evidence="1">Cytoplasm</location>
    </subcellularLocation>
</comment>
<comment type="similarity">
    <text evidence="1">Belongs to the UvrC family.</text>
</comment>
<gene>
    <name evidence="1" type="primary">uvrC</name>
    <name type="ordered locus">PMM0882</name>
</gene>
<protein>
    <recommendedName>
        <fullName evidence="1">UvrABC system protein C</fullName>
        <shortName evidence="1">Protein UvrC</shortName>
    </recommendedName>
    <alternativeName>
        <fullName evidence="1">Excinuclease ABC subunit C</fullName>
    </alternativeName>
</protein>
<feature type="chain" id="PRO_0000264925" description="UvrABC system protein C">
    <location>
        <begin position="1"/>
        <end position="656"/>
    </location>
</feature>
<feature type="domain" description="GIY-YIG" evidence="1">
    <location>
        <begin position="41"/>
        <end position="120"/>
    </location>
</feature>
<feature type="domain" description="UVR" evidence="1">
    <location>
        <begin position="230"/>
        <end position="265"/>
    </location>
</feature>
<proteinExistence type="inferred from homology"/>
<reference key="1">
    <citation type="journal article" date="2003" name="Nature">
        <title>Genome divergence in two Prochlorococcus ecotypes reflects oceanic niche differentiation.</title>
        <authorList>
            <person name="Rocap G."/>
            <person name="Larimer F.W."/>
            <person name="Lamerdin J.E."/>
            <person name="Malfatti S."/>
            <person name="Chain P."/>
            <person name="Ahlgren N.A."/>
            <person name="Arellano A."/>
            <person name="Coleman M."/>
            <person name="Hauser L."/>
            <person name="Hess W.R."/>
            <person name="Johnson Z.I."/>
            <person name="Land M.L."/>
            <person name="Lindell D."/>
            <person name="Post A.F."/>
            <person name="Regala W."/>
            <person name="Shah M."/>
            <person name="Shaw S.L."/>
            <person name="Steglich C."/>
            <person name="Sullivan M.B."/>
            <person name="Ting C.S."/>
            <person name="Tolonen A."/>
            <person name="Webb E.A."/>
            <person name="Zinser E.R."/>
            <person name="Chisholm S.W."/>
        </authorList>
    </citation>
    <scope>NUCLEOTIDE SEQUENCE [LARGE SCALE GENOMIC DNA]</scope>
    <source>
        <strain>CCMP1986 / NIES-2087 / MED4</strain>
    </source>
</reference>
<evidence type="ECO:0000255" key="1">
    <source>
        <dbReference type="HAMAP-Rule" id="MF_00203"/>
    </source>
</evidence>
<organism>
    <name type="scientific">Prochlorococcus marinus subsp. pastoris (strain CCMP1986 / NIES-2087 / MED4)</name>
    <dbReference type="NCBI Taxonomy" id="59919"/>
    <lineage>
        <taxon>Bacteria</taxon>
        <taxon>Bacillati</taxon>
        <taxon>Cyanobacteriota</taxon>
        <taxon>Cyanophyceae</taxon>
        <taxon>Synechococcales</taxon>
        <taxon>Prochlorococcaceae</taxon>
        <taxon>Prochlorococcus</taxon>
    </lineage>
</organism>
<dbReference type="EMBL" id="BX548174">
    <property type="protein sequence ID" value="CAE19341.1"/>
    <property type="molecule type" value="Genomic_DNA"/>
</dbReference>
<dbReference type="RefSeq" id="WP_011132515.1">
    <property type="nucleotide sequence ID" value="NC_005072.1"/>
</dbReference>
<dbReference type="SMR" id="Q7V1I9"/>
<dbReference type="STRING" id="59919.PMM0882"/>
<dbReference type="KEGG" id="pmm:PMM0882"/>
<dbReference type="eggNOG" id="COG0322">
    <property type="taxonomic scope" value="Bacteria"/>
</dbReference>
<dbReference type="HOGENOM" id="CLU_014841_3_2_3"/>
<dbReference type="OrthoDB" id="9804933at2"/>
<dbReference type="Proteomes" id="UP000001026">
    <property type="component" value="Chromosome"/>
</dbReference>
<dbReference type="GO" id="GO:0005737">
    <property type="term" value="C:cytoplasm"/>
    <property type="evidence" value="ECO:0007669"/>
    <property type="project" value="UniProtKB-SubCell"/>
</dbReference>
<dbReference type="GO" id="GO:0009380">
    <property type="term" value="C:excinuclease repair complex"/>
    <property type="evidence" value="ECO:0007669"/>
    <property type="project" value="InterPro"/>
</dbReference>
<dbReference type="GO" id="GO:0003677">
    <property type="term" value="F:DNA binding"/>
    <property type="evidence" value="ECO:0007669"/>
    <property type="project" value="UniProtKB-UniRule"/>
</dbReference>
<dbReference type="GO" id="GO:0009381">
    <property type="term" value="F:excinuclease ABC activity"/>
    <property type="evidence" value="ECO:0007669"/>
    <property type="project" value="UniProtKB-UniRule"/>
</dbReference>
<dbReference type="GO" id="GO:0006289">
    <property type="term" value="P:nucleotide-excision repair"/>
    <property type="evidence" value="ECO:0007669"/>
    <property type="project" value="UniProtKB-UniRule"/>
</dbReference>
<dbReference type="GO" id="GO:0009432">
    <property type="term" value="P:SOS response"/>
    <property type="evidence" value="ECO:0007669"/>
    <property type="project" value="UniProtKB-UniRule"/>
</dbReference>
<dbReference type="CDD" id="cd10434">
    <property type="entry name" value="GIY-YIG_UvrC_Cho"/>
    <property type="match status" value="1"/>
</dbReference>
<dbReference type="FunFam" id="3.40.1440.10:FF:000001">
    <property type="entry name" value="UvrABC system protein C"/>
    <property type="match status" value="1"/>
</dbReference>
<dbReference type="Gene3D" id="1.10.150.20">
    <property type="entry name" value="5' to 3' exonuclease, C-terminal subdomain"/>
    <property type="match status" value="1"/>
</dbReference>
<dbReference type="Gene3D" id="3.40.1440.10">
    <property type="entry name" value="GIY-YIG endonuclease"/>
    <property type="match status" value="1"/>
</dbReference>
<dbReference type="Gene3D" id="4.10.860.10">
    <property type="entry name" value="UVR domain"/>
    <property type="match status" value="1"/>
</dbReference>
<dbReference type="Gene3D" id="3.30.420.340">
    <property type="entry name" value="UvrC, RNAse H endonuclease domain"/>
    <property type="match status" value="1"/>
</dbReference>
<dbReference type="HAMAP" id="MF_00203">
    <property type="entry name" value="UvrC"/>
    <property type="match status" value="1"/>
</dbReference>
<dbReference type="InterPro" id="IPR041663">
    <property type="entry name" value="DisA/LigA_HHH"/>
</dbReference>
<dbReference type="InterPro" id="IPR000305">
    <property type="entry name" value="GIY-YIG_endonuc"/>
</dbReference>
<dbReference type="InterPro" id="IPR035901">
    <property type="entry name" value="GIY-YIG_endonuc_sf"/>
</dbReference>
<dbReference type="InterPro" id="IPR047296">
    <property type="entry name" value="GIY-YIG_UvrC_Cho"/>
</dbReference>
<dbReference type="InterPro" id="IPR003583">
    <property type="entry name" value="Hlx-hairpin-Hlx_DNA-bd_motif"/>
</dbReference>
<dbReference type="InterPro" id="IPR010994">
    <property type="entry name" value="RuvA_2-like"/>
</dbReference>
<dbReference type="InterPro" id="IPR001943">
    <property type="entry name" value="UVR_dom"/>
</dbReference>
<dbReference type="InterPro" id="IPR036876">
    <property type="entry name" value="UVR_dom_sf"/>
</dbReference>
<dbReference type="InterPro" id="IPR050066">
    <property type="entry name" value="UvrABC_protein_C"/>
</dbReference>
<dbReference type="InterPro" id="IPR004791">
    <property type="entry name" value="UvrC"/>
</dbReference>
<dbReference type="InterPro" id="IPR001162">
    <property type="entry name" value="UvrC_RNase_H_dom"/>
</dbReference>
<dbReference type="InterPro" id="IPR038476">
    <property type="entry name" value="UvrC_RNase_H_dom_sf"/>
</dbReference>
<dbReference type="NCBIfam" id="NF001824">
    <property type="entry name" value="PRK00558.1-5"/>
    <property type="match status" value="1"/>
</dbReference>
<dbReference type="NCBIfam" id="TIGR00194">
    <property type="entry name" value="uvrC"/>
    <property type="match status" value="1"/>
</dbReference>
<dbReference type="PANTHER" id="PTHR30562:SF1">
    <property type="entry name" value="UVRABC SYSTEM PROTEIN C"/>
    <property type="match status" value="1"/>
</dbReference>
<dbReference type="PANTHER" id="PTHR30562">
    <property type="entry name" value="UVRC/OXIDOREDUCTASE"/>
    <property type="match status" value="1"/>
</dbReference>
<dbReference type="Pfam" id="PF01541">
    <property type="entry name" value="GIY-YIG"/>
    <property type="match status" value="1"/>
</dbReference>
<dbReference type="Pfam" id="PF12826">
    <property type="entry name" value="HHH_2"/>
    <property type="match status" value="1"/>
</dbReference>
<dbReference type="Pfam" id="PF02151">
    <property type="entry name" value="UVR"/>
    <property type="match status" value="1"/>
</dbReference>
<dbReference type="Pfam" id="PF22920">
    <property type="entry name" value="UvrC_RNaseH"/>
    <property type="match status" value="1"/>
</dbReference>
<dbReference type="Pfam" id="PF08459">
    <property type="entry name" value="UvrC_RNaseH_dom"/>
    <property type="match status" value="1"/>
</dbReference>
<dbReference type="SMART" id="SM00465">
    <property type="entry name" value="GIYc"/>
    <property type="match status" value="1"/>
</dbReference>
<dbReference type="SMART" id="SM00278">
    <property type="entry name" value="HhH1"/>
    <property type="match status" value="2"/>
</dbReference>
<dbReference type="SUPFAM" id="SSF46600">
    <property type="entry name" value="C-terminal UvrC-binding domain of UvrB"/>
    <property type="match status" value="1"/>
</dbReference>
<dbReference type="SUPFAM" id="SSF82771">
    <property type="entry name" value="GIY-YIG endonuclease"/>
    <property type="match status" value="1"/>
</dbReference>
<dbReference type="SUPFAM" id="SSF47781">
    <property type="entry name" value="RuvA domain 2-like"/>
    <property type="match status" value="1"/>
</dbReference>
<dbReference type="PROSITE" id="PS50164">
    <property type="entry name" value="GIY_YIG"/>
    <property type="match status" value="1"/>
</dbReference>
<dbReference type="PROSITE" id="PS50151">
    <property type="entry name" value="UVR"/>
    <property type="match status" value="1"/>
</dbReference>
<dbReference type="PROSITE" id="PS50165">
    <property type="entry name" value="UVRC"/>
    <property type="match status" value="1"/>
</dbReference>
<name>UVRC_PROMP</name>
<keyword id="KW-0963">Cytoplasm</keyword>
<keyword id="KW-0227">DNA damage</keyword>
<keyword id="KW-0228">DNA excision</keyword>
<keyword id="KW-0234">DNA repair</keyword>
<keyword id="KW-0267">Excision nuclease</keyword>
<keyword id="KW-0742">SOS response</keyword>